<gene>
    <name evidence="1" type="primary">nuoC</name>
    <name type="ordered locus">Haur_3081</name>
</gene>
<reference key="1">
    <citation type="journal article" date="2011" name="Stand. Genomic Sci.">
        <title>Complete genome sequence of the filamentous gliding predatory bacterium Herpetosiphon aurantiacus type strain (114-95(T)).</title>
        <authorList>
            <person name="Kiss H."/>
            <person name="Nett M."/>
            <person name="Domin N."/>
            <person name="Martin K."/>
            <person name="Maresca J.A."/>
            <person name="Copeland A."/>
            <person name="Lapidus A."/>
            <person name="Lucas S."/>
            <person name="Berry K.W."/>
            <person name="Glavina Del Rio T."/>
            <person name="Dalin E."/>
            <person name="Tice H."/>
            <person name="Pitluck S."/>
            <person name="Richardson P."/>
            <person name="Bruce D."/>
            <person name="Goodwin L."/>
            <person name="Han C."/>
            <person name="Detter J.C."/>
            <person name="Schmutz J."/>
            <person name="Brettin T."/>
            <person name="Land M."/>
            <person name="Hauser L."/>
            <person name="Kyrpides N.C."/>
            <person name="Ivanova N."/>
            <person name="Goeker M."/>
            <person name="Woyke T."/>
            <person name="Klenk H.P."/>
            <person name="Bryant D.A."/>
        </authorList>
    </citation>
    <scope>NUCLEOTIDE SEQUENCE [LARGE SCALE GENOMIC DNA]</scope>
    <source>
        <strain>ATCC 23779 / DSM 785 / 114-95</strain>
    </source>
</reference>
<comment type="function">
    <text evidence="1">NDH-1 shuttles electrons from NADH, via FMN and iron-sulfur (Fe-S) centers, to quinones in the respiratory chain. The immediate electron acceptor for the enzyme in this species is believed to be ubiquinone. Couples the redox reaction to proton translocation (for every two electrons transferred, four hydrogen ions are translocated across the cytoplasmic membrane), and thus conserves the redox energy in a proton gradient.</text>
</comment>
<comment type="catalytic activity">
    <reaction evidence="1">
        <text>a quinone + NADH + 5 H(+)(in) = a quinol + NAD(+) + 4 H(+)(out)</text>
        <dbReference type="Rhea" id="RHEA:57888"/>
        <dbReference type="ChEBI" id="CHEBI:15378"/>
        <dbReference type="ChEBI" id="CHEBI:24646"/>
        <dbReference type="ChEBI" id="CHEBI:57540"/>
        <dbReference type="ChEBI" id="CHEBI:57945"/>
        <dbReference type="ChEBI" id="CHEBI:132124"/>
    </reaction>
</comment>
<comment type="subunit">
    <text evidence="1">NDH-1 is composed of 14 different subunits. Subunits NuoB, C, D, E, F, and G constitute the peripheral sector of the complex.</text>
</comment>
<comment type="subcellular location">
    <subcellularLocation>
        <location evidence="1">Cell membrane</location>
        <topology evidence="1">Peripheral membrane protein</topology>
        <orientation evidence="1">Cytoplasmic side</orientation>
    </subcellularLocation>
</comment>
<comment type="similarity">
    <text evidence="1">Belongs to the complex I 30 kDa subunit family.</text>
</comment>
<proteinExistence type="inferred from homology"/>
<evidence type="ECO:0000255" key="1">
    <source>
        <dbReference type="HAMAP-Rule" id="MF_01357"/>
    </source>
</evidence>
<sequence length="171" mass="19725">MIDRATLEQRVSAQFPTVRIGDESGDLCLTVERQQLPALAGWLRDEPDLAFTFLNQLCGVDYLGRDPRFEVVVHLTSFQNKMRVTLHIEVPEADPTIPTLARLFPTANFQERETYDMFGIIFTGHPGLERILMPEDWLGHPQRKDHPLGYEEVAFTHNEDWIYANKPFAKE</sequence>
<name>NUOC_HERA2</name>
<dbReference type="EC" id="7.1.1.-" evidence="1"/>
<dbReference type="EMBL" id="CP000875">
    <property type="protein sequence ID" value="ABX05719.1"/>
    <property type="molecule type" value="Genomic_DNA"/>
</dbReference>
<dbReference type="SMR" id="A9B4Z6"/>
<dbReference type="STRING" id="316274.Haur_3081"/>
<dbReference type="KEGG" id="hau:Haur_3081"/>
<dbReference type="eggNOG" id="COG0852">
    <property type="taxonomic scope" value="Bacteria"/>
</dbReference>
<dbReference type="HOGENOM" id="CLU_042628_6_0_0"/>
<dbReference type="InParanoid" id="A9B4Z6"/>
<dbReference type="Proteomes" id="UP000000787">
    <property type="component" value="Chromosome"/>
</dbReference>
<dbReference type="GO" id="GO:0005886">
    <property type="term" value="C:plasma membrane"/>
    <property type="evidence" value="ECO:0007669"/>
    <property type="project" value="UniProtKB-SubCell"/>
</dbReference>
<dbReference type="GO" id="GO:0008137">
    <property type="term" value="F:NADH dehydrogenase (ubiquinone) activity"/>
    <property type="evidence" value="ECO:0007669"/>
    <property type="project" value="InterPro"/>
</dbReference>
<dbReference type="GO" id="GO:0050136">
    <property type="term" value="F:NADH:ubiquinone reductase (non-electrogenic) activity"/>
    <property type="evidence" value="ECO:0007669"/>
    <property type="project" value="UniProtKB-UniRule"/>
</dbReference>
<dbReference type="GO" id="GO:0048038">
    <property type="term" value="F:quinone binding"/>
    <property type="evidence" value="ECO:0007669"/>
    <property type="project" value="UniProtKB-KW"/>
</dbReference>
<dbReference type="Gene3D" id="3.30.460.80">
    <property type="entry name" value="NADH:ubiquinone oxidoreductase, 30kDa subunit"/>
    <property type="match status" value="1"/>
</dbReference>
<dbReference type="HAMAP" id="MF_01357">
    <property type="entry name" value="NDH1_NuoC"/>
    <property type="match status" value="1"/>
</dbReference>
<dbReference type="InterPro" id="IPR010218">
    <property type="entry name" value="NADH_DH_suC"/>
</dbReference>
<dbReference type="InterPro" id="IPR037232">
    <property type="entry name" value="NADH_quin_OxRdtase_su_C/D-like"/>
</dbReference>
<dbReference type="InterPro" id="IPR001268">
    <property type="entry name" value="NADH_UbQ_OxRdtase_30kDa_su"/>
</dbReference>
<dbReference type="NCBIfam" id="TIGR01961">
    <property type="entry name" value="NuoC_fam"/>
    <property type="match status" value="1"/>
</dbReference>
<dbReference type="PANTHER" id="PTHR10884:SF14">
    <property type="entry name" value="NADH DEHYDROGENASE [UBIQUINONE] IRON-SULFUR PROTEIN 3, MITOCHONDRIAL"/>
    <property type="match status" value="1"/>
</dbReference>
<dbReference type="PANTHER" id="PTHR10884">
    <property type="entry name" value="NADH DEHYDROGENASE UBIQUINONE IRON-SULFUR PROTEIN 3"/>
    <property type="match status" value="1"/>
</dbReference>
<dbReference type="Pfam" id="PF00329">
    <property type="entry name" value="Complex1_30kDa"/>
    <property type="match status" value="1"/>
</dbReference>
<dbReference type="SUPFAM" id="SSF143243">
    <property type="entry name" value="Nqo5-like"/>
    <property type="match status" value="1"/>
</dbReference>
<accession>A9B4Z6</accession>
<protein>
    <recommendedName>
        <fullName evidence="1">NADH-quinone oxidoreductase subunit C</fullName>
        <ecNumber evidence="1">7.1.1.-</ecNumber>
    </recommendedName>
    <alternativeName>
        <fullName evidence="1">NADH dehydrogenase I subunit C</fullName>
    </alternativeName>
    <alternativeName>
        <fullName evidence="1">NDH-1 subunit C</fullName>
    </alternativeName>
</protein>
<feature type="chain" id="PRO_0000358112" description="NADH-quinone oxidoreductase subunit C">
    <location>
        <begin position="1"/>
        <end position="171"/>
    </location>
</feature>
<keyword id="KW-1003">Cell membrane</keyword>
<keyword id="KW-0472">Membrane</keyword>
<keyword id="KW-0520">NAD</keyword>
<keyword id="KW-0874">Quinone</keyword>
<keyword id="KW-1278">Translocase</keyword>
<keyword id="KW-0813">Transport</keyword>
<keyword id="KW-0830">Ubiquinone</keyword>
<organism>
    <name type="scientific">Herpetosiphon aurantiacus (strain ATCC 23779 / DSM 785 / 114-95)</name>
    <dbReference type="NCBI Taxonomy" id="316274"/>
    <lineage>
        <taxon>Bacteria</taxon>
        <taxon>Bacillati</taxon>
        <taxon>Chloroflexota</taxon>
        <taxon>Chloroflexia</taxon>
        <taxon>Herpetosiphonales</taxon>
        <taxon>Herpetosiphonaceae</taxon>
        <taxon>Herpetosiphon</taxon>
    </lineage>
</organism>